<name>PTH_CAMFF</name>
<keyword id="KW-0963">Cytoplasm</keyword>
<keyword id="KW-0378">Hydrolase</keyword>
<keyword id="KW-0694">RNA-binding</keyword>
<keyword id="KW-0820">tRNA-binding</keyword>
<comment type="function">
    <text evidence="1">Hydrolyzes ribosome-free peptidyl-tRNAs (with 1 or more amino acids incorporated), which drop off the ribosome during protein synthesis, or as a result of ribosome stalling.</text>
</comment>
<comment type="function">
    <text evidence="1">Catalyzes the release of premature peptidyl moieties from peptidyl-tRNA molecules trapped in stalled 50S ribosomal subunits, and thus maintains levels of free tRNAs and 50S ribosomes.</text>
</comment>
<comment type="catalytic activity">
    <reaction evidence="1">
        <text>an N-acyl-L-alpha-aminoacyl-tRNA + H2O = an N-acyl-L-amino acid + a tRNA + H(+)</text>
        <dbReference type="Rhea" id="RHEA:54448"/>
        <dbReference type="Rhea" id="RHEA-COMP:10123"/>
        <dbReference type="Rhea" id="RHEA-COMP:13883"/>
        <dbReference type="ChEBI" id="CHEBI:15377"/>
        <dbReference type="ChEBI" id="CHEBI:15378"/>
        <dbReference type="ChEBI" id="CHEBI:59874"/>
        <dbReference type="ChEBI" id="CHEBI:78442"/>
        <dbReference type="ChEBI" id="CHEBI:138191"/>
        <dbReference type="EC" id="3.1.1.29"/>
    </reaction>
</comment>
<comment type="subunit">
    <text evidence="1">Monomer.</text>
</comment>
<comment type="subcellular location">
    <subcellularLocation>
        <location evidence="1">Cytoplasm</location>
    </subcellularLocation>
</comment>
<comment type="similarity">
    <text evidence="1">Belongs to the PTH family.</text>
</comment>
<accession>A0RMV6</accession>
<reference key="1">
    <citation type="submission" date="2006-11" db="EMBL/GenBank/DDBJ databases">
        <title>Sequence of Campylobacter fetus subsp. fetus 82-40.</title>
        <authorList>
            <person name="Fouts D.E."/>
            <person name="Nelson K.E."/>
        </authorList>
    </citation>
    <scope>NUCLEOTIDE SEQUENCE [LARGE SCALE GENOMIC DNA]</scope>
    <source>
        <strain>82-40</strain>
    </source>
</reference>
<dbReference type="EC" id="3.1.1.29" evidence="1"/>
<dbReference type="EMBL" id="CP000487">
    <property type="protein sequence ID" value="ABK82490.1"/>
    <property type="molecule type" value="Genomic_DNA"/>
</dbReference>
<dbReference type="RefSeq" id="WP_002848461.1">
    <property type="nucleotide sequence ID" value="NC_008599.1"/>
</dbReference>
<dbReference type="SMR" id="A0RMV6"/>
<dbReference type="GeneID" id="61064181"/>
<dbReference type="KEGG" id="cff:CFF8240_0337"/>
<dbReference type="eggNOG" id="COG0193">
    <property type="taxonomic scope" value="Bacteria"/>
</dbReference>
<dbReference type="HOGENOM" id="CLU_062456_4_1_7"/>
<dbReference type="Proteomes" id="UP000000760">
    <property type="component" value="Chromosome"/>
</dbReference>
<dbReference type="GO" id="GO:0005737">
    <property type="term" value="C:cytoplasm"/>
    <property type="evidence" value="ECO:0007669"/>
    <property type="project" value="UniProtKB-SubCell"/>
</dbReference>
<dbReference type="GO" id="GO:0004045">
    <property type="term" value="F:peptidyl-tRNA hydrolase activity"/>
    <property type="evidence" value="ECO:0007669"/>
    <property type="project" value="UniProtKB-UniRule"/>
</dbReference>
<dbReference type="GO" id="GO:0000049">
    <property type="term" value="F:tRNA binding"/>
    <property type="evidence" value="ECO:0007669"/>
    <property type="project" value="UniProtKB-UniRule"/>
</dbReference>
<dbReference type="GO" id="GO:0006515">
    <property type="term" value="P:protein quality control for misfolded or incompletely synthesized proteins"/>
    <property type="evidence" value="ECO:0007669"/>
    <property type="project" value="UniProtKB-UniRule"/>
</dbReference>
<dbReference type="GO" id="GO:0072344">
    <property type="term" value="P:rescue of stalled ribosome"/>
    <property type="evidence" value="ECO:0007669"/>
    <property type="project" value="UniProtKB-UniRule"/>
</dbReference>
<dbReference type="CDD" id="cd00462">
    <property type="entry name" value="PTH"/>
    <property type="match status" value="1"/>
</dbReference>
<dbReference type="FunFam" id="3.40.50.1470:FF:000001">
    <property type="entry name" value="Peptidyl-tRNA hydrolase"/>
    <property type="match status" value="1"/>
</dbReference>
<dbReference type="Gene3D" id="3.40.50.1470">
    <property type="entry name" value="Peptidyl-tRNA hydrolase"/>
    <property type="match status" value="1"/>
</dbReference>
<dbReference type="HAMAP" id="MF_00083">
    <property type="entry name" value="Pept_tRNA_hydro_bact"/>
    <property type="match status" value="1"/>
</dbReference>
<dbReference type="InterPro" id="IPR001328">
    <property type="entry name" value="Pept_tRNA_hydro"/>
</dbReference>
<dbReference type="InterPro" id="IPR018171">
    <property type="entry name" value="Pept_tRNA_hydro_CS"/>
</dbReference>
<dbReference type="InterPro" id="IPR036416">
    <property type="entry name" value="Pept_tRNA_hydro_sf"/>
</dbReference>
<dbReference type="NCBIfam" id="TIGR00447">
    <property type="entry name" value="pth"/>
    <property type="match status" value="1"/>
</dbReference>
<dbReference type="PANTHER" id="PTHR17224">
    <property type="entry name" value="PEPTIDYL-TRNA HYDROLASE"/>
    <property type="match status" value="1"/>
</dbReference>
<dbReference type="PANTHER" id="PTHR17224:SF1">
    <property type="entry name" value="PEPTIDYL-TRNA HYDROLASE"/>
    <property type="match status" value="1"/>
</dbReference>
<dbReference type="Pfam" id="PF01195">
    <property type="entry name" value="Pept_tRNA_hydro"/>
    <property type="match status" value="1"/>
</dbReference>
<dbReference type="SUPFAM" id="SSF53178">
    <property type="entry name" value="Peptidyl-tRNA hydrolase-like"/>
    <property type="match status" value="1"/>
</dbReference>
<dbReference type="PROSITE" id="PS01195">
    <property type="entry name" value="PEPT_TRNA_HYDROL_1"/>
    <property type="match status" value="1"/>
</dbReference>
<dbReference type="PROSITE" id="PS01196">
    <property type="entry name" value="PEPT_TRNA_HYDROL_2"/>
    <property type="match status" value="1"/>
</dbReference>
<protein>
    <recommendedName>
        <fullName evidence="1">Peptidyl-tRNA hydrolase</fullName>
        <shortName evidence="1">Pth</shortName>
        <ecNumber evidence="1">3.1.1.29</ecNumber>
    </recommendedName>
</protein>
<proteinExistence type="inferred from homology"/>
<evidence type="ECO:0000255" key="1">
    <source>
        <dbReference type="HAMAP-Rule" id="MF_00083"/>
    </source>
</evidence>
<sequence length="181" mass="19760">MTLVAGLGNIGKEYENTRHNVGFMLIDTMLKDGGFNSVSSGKFQGELFKKGSLLLLKPSTFMNLSGNSLKAVNDFYKPDNIIVIHDDLDLPFGTVRFKRGGSSGGHNGIKSIDNLIGNDYDRVRIGIGRGNNSVISYVLGEFIDDEKDRLKDVLAHCKNAVLELISCGDITQISSKFTLKA</sequence>
<organism>
    <name type="scientific">Campylobacter fetus subsp. fetus (strain 82-40)</name>
    <dbReference type="NCBI Taxonomy" id="360106"/>
    <lineage>
        <taxon>Bacteria</taxon>
        <taxon>Pseudomonadati</taxon>
        <taxon>Campylobacterota</taxon>
        <taxon>Epsilonproteobacteria</taxon>
        <taxon>Campylobacterales</taxon>
        <taxon>Campylobacteraceae</taxon>
        <taxon>Campylobacter</taxon>
    </lineage>
</organism>
<feature type="chain" id="PRO_1000010577" description="Peptidyl-tRNA hydrolase">
    <location>
        <begin position="1"/>
        <end position="181"/>
    </location>
</feature>
<feature type="active site" description="Proton acceptor" evidence="1">
    <location>
        <position position="19"/>
    </location>
</feature>
<feature type="binding site" evidence="1">
    <location>
        <position position="14"/>
    </location>
    <ligand>
        <name>tRNA</name>
        <dbReference type="ChEBI" id="CHEBI:17843"/>
    </ligand>
</feature>
<feature type="binding site" evidence="1">
    <location>
        <position position="61"/>
    </location>
    <ligand>
        <name>tRNA</name>
        <dbReference type="ChEBI" id="CHEBI:17843"/>
    </ligand>
</feature>
<feature type="binding site" evidence="1">
    <location>
        <position position="63"/>
    </location>
    <ligand>
        <name>tRNA</name>
        <dbReference type="ChEBI" id="CHEBI:17843"/>
    </ligand>
</feature>
<feature type="binding site" evidence="1">
    <location>
        <position position="107"/>
    </location>
    <ligand>
        <name>tRNA</name>
        <dbReference type="ChEBI" id="CHEBI:17843"/>
    </ligand>
</feature>
<feature type="site" description="Discriminates between blocked and unblocked aminoacyl-tRNA" evidence="1">
    <location>
        <position position="9"/>
    </location>
</feature>
<feature type="site" description="Stabilizes the basic form of H active site to accept a proton" evidence="1">
    <location>
        <position position="86"/>
    </location>
</feature>
<gene>
    <name evidence="1" type="primary">pth</name>
    <name type="ordered locus">CFF8240_0337</name>
</gene>